<accession>Q924I2</accession>
<gene>
    <name type="primary">Map4k3</name>
</gene>
<protein>
    <recommendedName>
        <fullName>Mitogen-activated protein kinase kinase kinase kinase 3</fullName>
        <ecNumber>2.7.11.1</ecNumber>
    </recommendedName>
    <alternativeName>
        <fullName>Germinal center kinase-related protein kinase</fullName>
        <shortName>GLK</shortName>
    </alternativeName>
    <alternativeName>
        <fullName>MAPK/ERK kinase kinase kinase 3</fullName>
        <shortName>MEK kinase kinase 3</shortName>
        <shortName>MEKKK 3</shortName>
    </alternativeName>
</protein>
<evidence type="ECO:0000250" key="1">
    <source>
        <dbReference type="UniProtKB" id="Q8IVH8"/>
    </source>
</evidence>
<evidence type="ECO:0000250" key="2">
    <source>
        <dbReference type="UniProtKB" id="Q99JP0"/>
    </source>
</evidence>
<evidence type="ECO:0000255" key="3">
    <source>
        <dbReference type="PROSITE-ProRule" id="PRU00159"/>
    </source>
</evidence>
<evidence type="ECO:0000255" key="4">
    <source>
        <dbReference type="PROSITE-ProRule" id="PRU00795"/>
    </source>
</evidence>
<evidence type="ECO:0000256" key="5">
    <source>
        <dbReference type="SAM" id="MobiDB-lite"/>
    </source>
</evidence>
<evidence type="ECO:0000269" key="6">
    <source>
    </source>
</evidence>
<evidence type="ECO:0000305" key="7"/>
<evidence type="ECO:0000312" key="8">
    <source>
        <dbReference type="EMBL" id="AAK53214.1"/>
    </source>
</evidence>
<feature type="chain" id="PRO_0000086279" description="Mitogen-activated protein kinase kinase kinase kinase 3">
    <location>
        <begin position="1"/>
        <end position="873"/>
    </location>
</feature>
<feature type="domain" description="Protein kinase" evidence="3">
    <location>
        <begin position="16"/>
        <end position="273"/>
    </location>
</feature>
<feature type="domain" description="CNH" evidence="4">
    <location>
        <begin position="535"/>
        <end position="846"/>
    </location>
</feature>
<feature type="region of interest" description="Disordered" evidence="5">
    <location>
        <begin position="389"/>
        <end position="518"/>
    </location>
</feature>
<feature type="compositionally biased region" description="Pro residues" evidence="5">
    <location>
        <begin position="452"/>
        <end position="466"/>
    </location>
</feature>
<feature type="compositionally biased region" description="Polar residues" evidence="5">
    <location>
        <begin position="487"/>
        <end position="499"/>
    </location>
</feature>
<feature type="active site" description="Proton acceptor" evidence="3">
    <location>
        <position position="136"/>
    </location>
</feature>
<feature type="binding site" evidence="3">
    <location>
        <begin position="22"/>
        <end position="30"/>
    </location>
    <ligand>
        <name>ATP</name>
        <dbReference type="ChEBI" id="CHEBI:30616"/>
    </ligand>
</feature>
<feature type="binding site" evidence="3">
    <location>
        <position position="45"/>
    </location>
    <ligand>
        <name>ATP</name>
        <dbReference type="ChEBI" id="CHEBI:30616"/>
    </ligand>
</feature>
<feature type="modified residue" description="N-acetylmethionine" evidence="1">
    <location>
        <position position="1"/>
    </location>
</feature>
<feature type="modified residue" description="Phosphoserine" evidence="2">
    <location>
        <position position="329"/>
    </location>
</feature>
<feature type="modified residue" description="Phosphoserine" evidence="1">
    <location>
        <position position="377"/>
    </location>
</feature>
<name>M4K3_RAT</name>
<reference key="1">
    <citation type="journal article" date="2004" name="Genome Res.">
        <title>The status, quality, and expansion of the NIH full-length cDNA project: the Mammalian Gene Collection (MGC).</title>
        <authorList>
            <consortium name="The MGC Project Team"/>
        </authorList>
    </citation>
    <scope>NUCLEOTIDE SEQUENCE [LARGE SCALE MRNA] OF 1-75</scope>
</reference>
<reference evidence="7" key="2">
    <citation type="journal article" date="2001" name="J. Biol. Chem.">
        <title>Endophilin regulates JNK activation through its interaction with the germinal center kinase-like kinase.</title>
        <authorList>
            <person name="Ramjaun A.R."/>
            <person name="Angers A."/>
            <person name="Legendre-Guillemin V."/>
            <person name="Tong X.-K."/>
            <person name="McPherson P.S."/>
        </authorList>
    </citation>
    <scope>NUCLEOTIDE SEQUENCE [MRNA] OF 12-873</scope>
    <scope>INTERACTION WITH SH3GL2</scope>
</reference>
<organism evidence="8">
    <name type="scientific">Rattus norvegicus</name>
    <name type="common">Rat</name>
    <dbReference type="NCBI Taxonomy" id="10116"/>
    <lineage>
        <taxon>Eukaryota</taxon>
        <taxon>Metazoa</taxon>
        <taxon>Chordata</taxon>
        <taxon>Craniata</taxon>
        <taxon>Vertebrata</taxon>
        <taxon>Euteleostomi</taxon>
        <taxon>Mammalia</taxon>
        <taxon>Eutheria</taxon>
        <taxon>Euarchontoglires</taxon>
        <taxon>Glires</taxon>
        <taxon>Rodentia</taxon>
        <taxon>Myomorpha</taxon>
        <taxon>Muroidea</taxon>
        <taxon>Muridae</taxon>
        <taxon>Murinae</taxon>
        <taxon>Rattus</taxon>
    </lineage>
</organism>
<sequence length="873" mass="98679">MNPGFDLSRRNPQEDFELIQRIGSGTYGDVYKARNVNTGELAAIKVIKLEPGEDFAVVQQEIIMMKDCKHANIVAYFGSYLRRDKLWICMEFCGGGSLQDIYHVTGPLSELQIAYVSRETLQGLYYLHSKGKMHRDIKGANILLTDNGHVKLADFGVSAQITATIAKRKSFIGTPYWMAPEVAAVERKGGYNQLCDLWAVGITAIELAELQPPMFDLHPMRALFLMTKSNFQPPKLKDKLKWSNSFHHFVKMALTKNPKKRPTAEKLLQHPFVTQPLTRSLAIELLDKVNNPDHSTYHDFDDDDPEPLVAVPHRIPSTSRNVREEKTRSEINFGQVKFDPPLRKETEPHHELDLQLEYGQGHQSNYFLGGNKSLLKSVEEELHQRGHVAHLEDDEGDDDDSKHSTLKAKVPPPLPPKPKSISIPQDTHSSEDSNQGTIKRCPSSGSPAKPSHVPPRPPPPRLPPQKPAVLGNGVSSFQLNGERDGSVHQQQSEQRGTNLSRKEKKDVPKPISNGLPPTPKVHMGACFSKVFNGCPLKIHCATSWINPDTRDQYLIFGAEEGIYTLNLNELHETSMEQLFPRRCTWLYVMNNCLLSVSGKASQLYSHNLPGLFDYARQMQKLPVAIPAHKLPDRILPRKFAVSAKIPETKWCQKCCVVRNPYTGHKYLCGALQTSIVLLEWVEPMQKFMLIKHIEFPMPCPLRMFEMLVVPEQEYPLVCVGVSRGRDFNQVVRFETVNPNSTSSWFTESDTPQTNVTHVTQLERDTILVCLDCCIKIVNLQGRLKSSRKLSSELTFDFQIESIVCLQDSVLAFWKHGMQGRSFRSNEVTQEISDNTRIFRLLGSDRVVVLESRPTDNPTANSNLYILAGHENSY</sequence>
<keyword id="KW-0007">Acetylation</keyword>
<keyword id="KW-0067">ATP-binding</keyword>
<keyword id="KW-0418">Kinase</keyword>
<keyword id="KW-0547">Nucleotide-binding</keyword>
<keyword id="KW-0597">Phosphoprotein</keyword>
<keyword id="KW-1185">Reference proteome</keyword>
<keyword id="KW-0723">Serine/threonine-protein kinase</keyword>
<keyword id="KW-0808">Transferase</keyword>
<dbReference type="EC" id="2.7.11.1"/>
<dbReference type="EMBL" id="AI112857">
    <property type="status" value="NOT_ANNOTATED_CDS"/>
    <property type="molecule type" value="mRNA"/>
</dbReference>
<dbReference type="EMBL" id="AF312224">
    <property type="protein sequence ID" value="AAK53214.1"/>
    <property type="molecule type" value="mRNA"/>
</dbReference>
<dbReference type="RefSeq" id="NP_596898.1">
    <property type="nucleotide sequence ID" value="NM_133407.1"/>
</dbReference>
<dbReference type="SMR" id="Q924I2"/>
<dbReference type="BioGRID" id="251030">
    <property type="interactions" value="1"/>
</dbReference>
<dbReference type="FunCoup" id="Q924I2">
    <property type="interactions" value="4243"/>
</dbReference>
<dbReference type="MINT" id="Q924I2"/>
<dbReference type="STRING" id="10116.ENSRNOP00000070735"/>
<dbReference type="iPTMnet" id="Q924I2"/>
<dbReference type="PhosphoSitePlus" id="Q924I2"/>
<dbReference type="PaxDb" id="10116-ENSRNOP00000010366"/>
<dbReference type="Ensembl" id="ENSRNOT00000010366.8">
    <property type="protein sequence ID" value="ENSRNOP00000010366.7"/>
    <property type="gene ID" value="ENSRNOG00000007172.8"/>
</dbReference>
<dbReference type="GeneID" id="170920"/>
<dbReference type="KEGG" id="rno:170920"/>
<dbReference type="UCSC" id="RGD:621280">
    <property type="organism name" value="rat"/>
</dbReference>
<dbReference type="AGR" id="RGD:621280"/>
<dbReference type="CTD" id="8491"/>
<dbReference type="RGD" id="621280">
    <property type="gene designation" value="Map4k3"/>
</dbReference>
<dbReference type="eggNOG" id="KOG0576">
    <property type="taxonomic scope" value="Eukaryota"/>
</dbReference>
<dbReference type="InParanoid" id="Q924I2"/>
<dbReference type="OrthoDB" id="8693905at2759"/>
<dbReference type="BRENDA" id="2.7.11.25">
    <property type="organism ID" value="5301"/>
</dbReference>
<dbReference type="PRO" id="PR:Q924I2"/>
<dbReference type="Proteomes" id="UP000002494">
    <property type="component" value="Chromosome 6"/>
</dbReference>
<dbReference type="GO" id="GO:0005737">
    <property type="term" value="C:cytoplasm"/>
    <property type="evidence" value="ECO:0000318"/>
    <property type="project" value="GO_Central"/>
</dbReference>
<dbReference type="GO" id="GO:0005524">
    <property type="term" value="F:ATP binding"/>
    <property type="evidence" value="ECO:0000250"/>
    <property type="project" value="UniProtKB"/>
</dbReference>
<dbReference type="GO" id="GO:0008349">
    <property type="term" value="F:MAP kinase kinase kinase kinase activity"/>
    <property type="evidence" value="ECO:0000318"/>
    <property type="project" value="GO_Central"/>
</dbReference>
<dbReference type="GO" id="GO:0106310">
    <property type="term" value="F:protein serine kinase activity"/>
    <property type="evidence" value="ECO:0007669"/>
    <property type="project" value="RHEA"/>
</dbReference>
<dbReference type="GO" id="GO:0004674">
    <property type="term" value="F:protein serine/threonine kinase activity"/>
    <property type="evidence" value="ECO:0000250"/>
    <property type="project" value="UniProtKB"/>
</dbReference>
<dbReference type="GO" id="GO:0017124">
    <property type="term" value="F:SH3 domain binding"/>
    <property type="evidence" value="ECO:0000353"/>
    <property type="project" value="RGD"/>
</dbReference>
<dbReference type="GO" id="GO:0035556">
    <property type="term" value="P:intracellular signal transduction"/>
    <property type="evidence" value="ECO:0000250"/>
    <property type="project" value="UniProtKB"/>
</dbReference>
<dbReference type="GO" id="GO:0006468">
    <property type="term" value="P:protein phosphorylation"/>
    <property type="evidence" value="ECO:0000250"/>
    <property type="project" value="UniProtKB"/>
</dbReference>
<dbReference type="GO" id="GO:0034612">
    <property type="term" value="P:response to tumor necrosis factor"/>
    <property type="evidence" value="ECO:0000266"/>
    <property type="project" value="RGD"/>
</dbReference>
<dbReference type="GO" id="GO:0009411">
    <property type="term" value="P:response to UV"/>
    <property type="evidence" value="ECO:0000250"/>
    <property type="project" value="UniProtKB"/>
</dbReference>
<dbReference type="CDD" id="cd06613">
    <property type="entry name" value="STKc_MAP4K3_like"/>
    <property type="match status" value="1"/>
</dbReference>
<dbReference type="FunFam" id="1.10.510.10:FF:000031">
    <property type="entry name" value="Mitogen-activated protein kinase kinase kinase kinase"/>
    <property type="match status" value="1"/>
</dbReference>
<dbReference type="Gene3D" id="1.10.510.10">
    <property type="entry name" value="Transferase(Phosphotransferase) domain 1"/>
    <property type="match status" value="1"/>
</dbReference>
<dbReference type="InterPro" id="IPR001180">
    <property type="entry name" value="CNH_dom"/>
</dbReference>
<dbReference type="InterPro" id="IPR011009">
    <property type="entry name" value="Kinase-like_dom_sf"/>
</dbReference>
<dbReference type="InterPro" id="IPR021160">
    <property type="entry name" value="MAPKKKK"/>
</dbReference>
<dbReference type="InterPro" id="IPR000719">
    <property type="entry name" value="Prot_kinase_dom"/>
</dbReference>
<dbReference type="InterPro" id="IPR017441">
    <property type="entry name" value="Protein_kinase_ATP_BS"/>
</dbReference>
<dbReference type="InterPro" id="IPR050629">
    <property type="entry name" value="STE20/SPS1-PAK"/>
</dbReference>
<dbReference type="PANTHER" id="PTHR48012:SF17">
    <property type="entry name" value="MITOGEN-ACTIVATED PROTEIN KINASE KINASE KINASE KINASE 3"/>
    <property type="match status" value="1"/>
</dbReference>
<dbReference type="PANTHER" id="PTHR48012">
    <property type="entry name" value="STERILE20-LIKE KINASE, ISOFORM B-RELATED"/>
    <property type="match status" value="1"/>
</dbReference>
<dbReference type="Pfam" id="PF00780">
    <property type="entry name" value="CNH"/>
    <property type="match status" value="1"/>
</dbReference>
<dbReference type="Pfam" id="PF00069">
    <property type="entry name" value="Pkinase"/>
    <property type="match status" value="1"/>
</dbReference>
<dbReference type="PIRSF" id="PIRSF038172">
    <property type="entry name" value="MAPKKKK"/>
    <property type="match status" value="1"/>
</dbReference>
<dbReference type="SMART" id="SM00036">
    <property type="entry name" value="CNH"/>
    <property type="match status" value="1"/>
</dbReference>
<dbReference type="SMART" id="SM00220">
    <property type="entry name" value="S_TKc"/>
    <property type="match status" value="1"/>
</dbReference>
<dbReference type="SUPFAM" id="SSF56112">
    <property type="entry name" value="Protein kinase-like (PK-like)"/>
    <property type="match status" value="1"/>
</dbReference>
<dbReference type="PROSITE" id="PS50219">
    <property type="entry name" value="CNH"/>
    <property type="match status" value="1"/>
</dbReference>
<dbReference type="PROSITE" id="PS00107">
    <property type="entry name" value="PROTEIN_KINASE_ATP"/>
    <property type="match status" value="1"/>
</dbReference>
<dbReference type="PROSITE" id="PS50011">
    <property type="entry name" value="PROTEIN_KINASE_DOM"/>
    <property type="match status" value="1"/>
</dbReference>
<comment type="function">
    <text evidence="1">Serine/threonine kinase that plays a role in the response to environmental stress. Appears to act upstream of the JUN N-terminal pathway. Activator of the Hippo signaling pathway which plays a pivotal role in organ size control and tumor suppression by restricting proliferation and promoting apoptosis. MAP4Ks act in parallel to and are partially redundant with STK3/MST2 and STK4/MST2 in the phosphorylation and activation of LATS1/2, and establish MAP4Ks as components of the expanded Hippo pathway.</text>
</comment>
<comment type="catalytic activity">
    <reaction evidence="1">
        <text>L-seryl-[protein] + ATP = O-phospho-L-seryl-[protein] + ADP + H(+)</text>
        <dbReference type="Rhea" id="RHEA:17989"/>
        <dbReference type="Rhea" id="RHEA-COMP:9863"/>
        <dbReference type="Rhea" id="RHEA-COMP:11604"/>
        <dbReference type="ChEBI" id="CHEBI:15378"/>
        <dbReference type="ChEBI" id="CHEBI:29999"/>
        <dbReference type="ChEBI" id="CHEBI:30616"/>
        <dbReference type="ChEBI" id="CHEBI:83421"/>
        <dbReference type="ChEBI" id="CHEBI:456216"/>
        <dbReference type="EC" id="2.7.11.1"/>
    </reaction>
</comment>
<comment type="catalytic activity">
    <reaction evidence="1">
        <text>L-threonyl-[protein] + ATP = O-phospho-L-threonyl-[protein] + ADP + H(+)</text>
        <dbReference type="Rhea" id="RHEA:46608"/>
        <dbReference type="Rhea" id="RHEA-COMP:11060"/>
        <dbReference type="Rhea" id="RHEA-COMP:11605"/>
        <dbReference type="ChEBI" id="CHEBI:15378"/>
        <dbReference type="ChEBI" id="CHEBI:30013"/>
        <dbReference type="ChEBI" id="CHEBI:30616"/>
        <dbReference type="ChEBI" id="CHEBI:61977"/>
        <dbReference type="ChEBI" id="CHEBI:456216"/>
        <dbReference type="EC" id="2.7.11.1"/>
    </reaction>
</comment>
<comment type="cofactor">
    <cofactor evidence="1">
        <name>Mg(2+)</name>
        <dbReference type="ChEBI" id="CHEBI:18420"/>
    </cofactor>
</comment>
<comment type="subunit">
    <text evidence="6">Interacts with SH3GL2. Interaction appears to regulate MAP4K3-mediated JNK activation.</text>
</comment>
<comment type="similarity">
    <text evidence="7">Belongs to the protein kinase superfamily. STE Ser/Thr protein kinase family. STE20 subfamily.</text>
</comment>
<proteinExistence type="evidence at protein level"/>